<name>SCX3_CENEX</name>
<keyword id="KW-0027">Amidation</keyword>
<keyword id="KW-1015">Disulfide bond</keyword>
<keyword id="KW-0872">Ion channel impairing toxin</keyword>
<keyword id="KW-0528">Neurotoxin</keyword>
<keyword id="KW-0964">Secreted</keyword>
<keyword id="KW-0732">Signal</keyword>
<keyword id="KW-0800">Toxin</keyword>
<keyword id="KW-0738">Voltage-gated sodium channel impairing toxin</keyword>
<accession>Q68PH2</accession>
<dbReference type="EMBL" id="AY649861">
    <property type="protein sequence ID" value="AAT97994.1"/>
    <property type="molecule type" value="mRNA"/>
</dbReference>
<dbReference type="SMR" id="Q68PH2"/>
<dbReference type="GO" id="GO:0005576">
    <property type="term" value="C:extracellular region"/>
    <property type="evidence" value="ECO:0007669"/>
    <property type="project" value="UniProtKB-SubCell"/>
</dbReference>
<dbReference type="GO" id="GO:0019871">
    <property type="term" value="F:sodium channel inhibitor activity"/>
    <property type="evidence" value="ECO:0007669"/>
    <property type="project" value="InterPro"/>
</dbReference>
<dbReference type="GO" id="GO:0090729">
    <property type="term" value="F:toxin activity"/>
    <property type="evidence" value="ECO:0007669"/>
    <property type="project" value="UniProtKB-KW"/>
</dbReference>
<dbReference type="GO" id="GO:0006952">
    <property type="term" value="P:defense response"/>
    <property type="evidence" value="ECO:0007669"/>
    <property type="project" value="InterPro"/>
</dbReference>
<dbReference type="CDD" id="cd23106">
    <property type="entry name" value="neurotoxins_LC_scorpion"/>
    <property type="match status" value="1"/>
</dbReference>
<dbReference type="FunFam" id="3.30.30.10:FF:000002">
    <property type="entry name" value="Alpha-like toxin BmK-M1"/>
    <property type="match status" value="1"/>
</dbReference>
<dbReference type="Gene3D" id="3.30.30.10">
    <property type="entry name" value="Knottin, scorpion toxin-like"/>
    <property type="match status" value="1"/>
</dbReference>
<dbReference type="InterPro" id="IPR044062">
    <property type="entry name" value="LCN-type_CS_alpha_beta_dom"/>
</dbReference>
<dbReference type="InterPro" id="IPR003614">
    <property type="entry name" value="Scorpion_toxin-like"/>
</dbReference>
<dbReference type="InterPro" id="IPR036574">
    <property type="entry name" value="Scorpion_toxin-like_sf"/>
</dbReference>
<dbReference type="InterPro" id="IPR018218">
    <property type="entry name" value="Scorpion_toxinL"/>
</dbReference>
<dbReference type="InterPro" id="IPR002061">
    <property type="entry name" value="Scorpion_toxinL/defensin"/>
</dbReference>
<dbReference type="Pfam" id="PF00537">
    <property type="entry name" value="Toxin_3"/>
    <property type="match status" value="1"/>
</dbReference>
<dbReference type="PRINTS" id="PR00285">
    <property type="entry name" value="SCORPNTOXIN"/>
</dbReference>
<dbReference type="SMART" id="SM00505">
    <property type="entry name" value="Knot1"/>
    <property type="match status" value="1"/>
</dbReference>
<dbReference type="SUPFAM" id="SSF57095">
    <property type="entry name" value="Scorpion toxin-like"/>
    <property type="match status" value="1"/>
</dbReference>
<dbReference type="PROSITE" id="PS51863">
    <property type="entry name" value="LCN_CSAB"/>
    <property type="match status" value="1"/>
</dbReference>
<evidence type="ECO:0000250" key="1"/>
<evidence type="ECO:0000255" key="2"/>
<evidence type="ECO:0000255" key="3">
    <source>
        <dbReference type="PROSITE-ProRule" id="PRU01210"/>
    </source>
</evidence>
<evidence type="ECO:0000305" key="4"/>
<protein>
    <recommendedName>
        <fullName>Neurotoxin Cex3</fullName>
    </recommendedName>
</protein>
<feature type="signal peptide" evidence="2">
    <location>
        <begin position="1" status="less than"/>
        <end position="1"/>
    </location>
</feature>
<feature type="chain" id="PRO_0000254066" description="Neurotoxin Cex3">
    <location>
        <begin position="2"/>
        <end position="66"/>
    </location>
</feature>
<feature type="propeptide" id="PRO_0000254067">
    <location>
        <begin position="67"/>
        <end position="69"/>
    </location>
</feature>
<feature type="domain" description="LCN-type CS-alpha/beta" evidence="3">
    <location>
        <begin position="2"/>
        <end position="67"/>
    </location>
</feature>
<feature type="modified residue" description="Cysteine amide" evidence="2">
    <location>
        <position position="66"/>
    </location>
</feature>
<feature type="disulfide bond" evidence="3">
    <location>
        <begin position="13"/>
        <end position="66"/>
    </location>
</feature>
<feature type="disulfide bond" evidence="3">
    <location>
        <begin position="17"/>
        <end position="42"/>
    </location>
</feature>
<feature type="disulfide bond" evidence="3">
    <location>
        <begin position="26"/>
        <end position="47"/>
    </location>
</feature>
<feature type="disulfide bond" evidence="3">
    <location>
        <begin position="30"/>
        <end position="49"/>
    </location>
</feature>
<feature type="non-terminal residue">
    <location>
        <position position="1"/>
    </location>
</feature>
<proteinExistence type="evidence at transcript level"/>
<sequence>AKDGYLVNKSTGCKYECFWLGKNEFCDKECKAKNQGGSYGYCYSFACWCEGLPESTSTYPLPNKSCGRK</sequence>
<comment type="function">
    <text evidence="1">Beta toxins bind voltage-independently at site-4 of sodium channels (Nav) and shift the voltage of activation toward more negative potentials thereby affecting sodium channel activation and promoting spontaneous and repetitive firing.</text>
</comment>
<comment type="subcellular location">
    <subcellularLocation>
        <location evidence="1">Secreted</location>
    </subcellularLocation>
</comment>
<comment type="tissue specificity">
    <text>Expressed by the venom gland.</text>
</comment>
<comment type="domain">
    <text evidence="4">Has the structural arrangement of an alpha-helix connected to antiparallel beta-sheets by disulfide bonds (CS-alpha/beta).</text>
</comment>
<comment type="similarity">
    <text evidence="4">Belongs to the long (4 C-C) scorpion toxin superfamily. Sodium channel inhibitor family. Beta subfamily.</text>
</comment>
<organism>
    <name type="scientific">Centruroides exilicauda</name>
    <name type="common">Bark scorpion</name>
    <name type="synonym">Buthus exilicauda</name>
    <dbReference type="NCBI Taxonomy" id="6879"/>
    <lineage>
        <taxon>Eukaryota</taxon>
        <taxon>Metazoa</taxon>
        <taxon>Ecdysozoa</taxon>
        <taxon>Arthropoda</taxon>
        <taxon>Chelicerata</taxon>
        <taxon>Arachnida</taxon>
        <taxon>Scorpiones</taxon>
        <taxon>Buthida</taxon>
        <taxon>Buthoidea</taxon>
        <taxon>Buthidae</taxon>
        <taxon>Centruroides</taxon>
    </lineage>
</organism>
<reference key="1">
    <citation type="journal article" date="2004" name="Biochimie">
        <title>Biochemical, genetic and physiological characterization of venom components from two species of scorpions: Centruroides exilicauda Wood and Centruroides sculpturatus Ewing.</title>
        <authorList>
            <person name="Valdez-Cruz N.A."/>
            <person name="Davila S."/>
            <person name="Licea A."/>
            <person name="Corona M."/>
            <person name="Zamudio F.Z."/>
            <person name="Garcia-Valdes J."/>
            <person name="Boyer L."/>
            <person name="Possani L.D."/>
        </authorList>
    </citation>
    <scope>NUCLEOTIDE SEQUENCE [MRNA]</scope>
    <source>
        <tissue>Venom gland</tissue>
    </source>
</reference>